<gene>
    <name type="primary">dbh</name>
</gene>
<protein>
    <recommendedName>
        <fullName>DNA polymerase IV</fullName>
        <shortName>Pol IV</shortName>
        <ecNumber>2.7.7.7</ecNumber>
    </recommendedName>
</protein>
<comment type="function">
    <text>Poorly processive, error-prone DNA polymerase involved in untargeted mutagenesis. Copies undamaged DNA at stalled replication forks, which arise in vivo from mismatched or misaligned primer ends. These misaligned primers can be extended by PolIV. Exhibits no 3'-5' exonuclease (proofreading) activity. May be involved in translesional synthesis.</text>
</comment>
<comment type="catalytic activity">
    <reaction>
        <text>DNA(n) + a 2'-deoxyribonucleoside 5'-triphosphate = DNA(n+1) + diphosphate</text>
        <dbReference type="Rhea" id="RHEA:22508"/>
        <dbReference type="Rhea" id="RHEA-COMP:17339"/>
        <dbReference type="Rhea" id="RHEA-COMP:17340"/>
        <dbReference type="ChEBI" id="CHEBI:33019"/>
        <dbReference type="ChEBI" id="CHEBI:61560"/>
        <dbReference type="ChEBI" id="CHEBI:173112"/>
        <dbReference type="EC" id="2.7.7.7"/>
    </reaction>
</comment>
<comment type="cofactor">
    <cofactor>
        <name>Mg(2+)</name>
        <dbReference type="ChEBI" id="CHEBI:18420"/>
    </cofactor>
    <text>Binds 2 magnesium ions per subunit.</text>
</comment>
<comment type="subunit">
    <text>Monomer.</text>
</comment>
<comment type="subcellular location">
    <subcellularLocation>
        <location evidence="1">Cytoplasm</location>
    </subcellularLocation>
</comment>
<comment type="domain">
    <text>The catalytic core consists of fingers, palm and thumb subdomains, but the fingers and thumb subdomains are much smaller than in high-fidelity polymerases; residues from five sequence motifs of the Y-family cluster around an active site cleft that can accommodate DNA and nucleotide substrates with relaxed geometric constraints, with consequently higher rates of misincorporation and low processivity. It lacks the O helices present in high-fidelity DNA polymerases in the fingers domain.</text>
</comment>
<comment type="similarity">
    <text evidence="1">Belongs to the DNA polymerase type-Y family.</text>
</comment>
<name>DPO4_SACSO</name>
<organism>
    <name type="scientific">Saccharolobus solfataricus</name>
    <name type="common">Sulfolobus solfataricus</name>
    <dbReference type="NCBI Taxonomy" id="2287"/>
    <lineage>
        <taxon>Archaea</taxon>
        <taxon>Thermoproteota</taxon>
        <taxon>Thermoprotei</taxon>
        <taxon>Sulfolobales</taxon>
        <taxon>Sulfolobaceae</taxon>
        <taxon>Saccharolobus</taxon>
    </lineage>
</organism>
<sequence>MIVIFVDFDYFFAQVEEVLNPQYKGKPLVVCVYSGRTKTSGAVATANYEARKLGVKAGMPIIKAMQIAPSAIYVPMRKPIYEAFSNRIMNLLNKHADKIEVASIDEAYLDVTNKVEGNFENGIELARKIKQEILEKEKITVTVGVAPNKILAKIIADKSKPNGLGVIRPTEVQDFLNELDIDEIPGIGSVLARRLNELGIQKLRDILSKNYNELEKITGKAKALYLLKLAQNKYSEPVENKSKIPHGRYLTLPYNTRDVKVILPYLKKAINEAYNKVNGIPMRITVIAIMEDLDILSKGKKFKHGISIDNAYKVAEDLLRELLVRDKRRNVRRIGVKLDNIIINKTNLSDFFDI</sequence>
<keyword id="KW-0002">3D-structure</keyword>
<keyword id="KW-0963">Cytoplasm</keyword>
<keyword id="KW-0227">DNA damage</keyword>
<keyword id="KW-0234">DNA repair</keyword>
<keyword id="KW-0235">DNA replication</keyword>
<keyword id="KW-0238">DNA-binding</keyword>
<keyword id="KW-0239">DNA-directed DNA polymerase</keyword>
<keyword id="KW-0460">Magnesium</keyword>
<keyword id="KW-0479">Metal-binding</keyword>
<keyword id="KW-0515">Mutator protein</keyword>
<keyword id="KW-0548">Nucleotidyltransferase</keyword>
<keyword id="KW-0808">Transferase</keyword>
<reference key="1">
    <citation type="journal article" date="1996" name="Mutat. Res.">
        <title>Identification of a DinB/UmuC homolog in the archeon Sulfolobus solfataricus.</title>
        <authorList>
            <person name="Kulaeva O.I."/>
            <person name="Koonin E.V."/>
            <person name="McDonald J.P."/>
            <person name="Randall S.K."/>
            <person name="Rabinovich N."/>
            <person name="Connaughton J.F."/>
            <person name="Levine A.S."/>
            <person name="Woodgate R."/>
        </authorList>
    </citation>
    <scope>NUCLEOTIDE SEQUENCE [GENOMIC DNA]</scope>
    <source>
        <strain>ATCC 35091 / DSM 1616 / JCM 8930 / NBRC 15331 / P1</strain>
    </source>
</reference>
<reference key="2">
    <citation type="journal article" date="2001" name="Mol. Cell">
        <title>Crystal structure of a DinB lesion bypass DNA polymerase catalytic fragment reveals a classic polymerase catalytic domain.</title>
        <authorList>
            <person name="Zhou B.-L."/>
            <person name="Pata J.D."/>
            <person name="Steitz T.A."/>
        </authorList>
    </citation>
    <scope>X-RAY CRYSTALLOGRAPHY (2.3 ANGSTROMS) OF 2-216</scope>
    <source>
        <strain>ATCC 35091 / DSM 1616 / JCM 8930 / NBRC 15331 / P1</strain>
    </source>
</reference>
<reference key="3">
    <citation type="journal article" date="2001" name="Nat. Struct. Biol.">
        <title>Crystal structure of a DinB family error-prone DNA polymerase from Sulfolobus solfataricus.</title>
        <authorList>
            <person name="Silvian L.F."/>
            <person name="Toth E.A."/>
            <person name="Pham P."/>
            <person name="Goodman M.F."/>
            <person name="Ellenberger T."/>
        </authorList>
    </citation>
    <scope>X-RAY CRYSTALLOGRAPHY (2.8 ANGSTROMS)</scope>
</reference>
<proteinExistence type="evidence at protein level"/>
<accession>P96022</accession>
<evidence type="ECO:0000305" key="1"/>
<evidence type="ECO:0007829" key="2">
    <source>
        <dbReference type="PDB" id="1IM4"/>
    </source>
</evidence>
<evidence type="ECO:0007829" key="3">
    <source>
        <dbReference type="PDB" id="1K1Q"/>
    </source>
</evidence>
<feature type="chain" id="PRO_0000173975" description="DNA polymerase IV">
    <location>
        <begin position="1"/>
        <end position="354"/>
    </location>
</feature>
<feature type="domain" description="UmuC">
    <location>
        <begin position="3"/>
        <end position="188"/>
    </location>
</feature>
<feature type="active site">
    <location>
        <position position="106"/>
    </location>
</feature>
<feature type="binding site">
    <location>
        <position position="7"/>
    </location>
    <ligand>
        <name>Mg(2+)</name>
        <dbReference type="ChEBI" id="CHEBI:18420"/>
    </ligand>
</feature>
<feature type="binding site">
    <location>
        <position position="105"/>
    </location>
    <ligand>
        <name>Mg(2+)</name>
        <dbReference type="ChEBI" id="CHEBI:18420"/>
    </ligand>
</feature>
<feature type="site" description="Substrate discrimination">
    <location>
        <position position="12"/>
    </location>
</feature>
<feature type="strand" evidence="2">
    <location>
        <begin position="3"/>
        <end position="8"/>
    </location>
</feature>
<feature type="helix" evidence="2">
    <location>
        <begin position="11"/>
        <end position="19"/>
    </location>
</feature>
<feature type="helix" evidence="2">
    <location>
        <begin position="21"/>
        <end position="23"/>
    </location>
</feature>
<feature type="strand" evidence="3">
    <location>
        <begin position="24"/>
        <end position="26"/>
    </location>
</feature>
<feature type="strand" evidence="2">
    <location>
        <begin position="28"/>
        <end position="33"/>
    </location>
</feature>
<feature type="strand" evidence="2">
    <location>
        <begin position="41"/>
        <end position="46"/>
    </location>
</feature>
<feature type="helix" evidence="2">
    <location>
        <begin position="48"/>
        <end position="51"/>
    </location>
</feature>
<feature type="turn" evidence="2">
    <location>
        <begin position="52"/>
        <end position="54"/>
    </location>
</feature>
<feature type="strand" evidence="3">
    <location>
        <begin position="57"/>
        <end position="59"/>
    </location>
</feature>
<feature type="helix" evidence="2">
    <location>
        <begin position="61"/>
        <end position="67"/>
    </location>
</feature>
<feature type="strand" evidence="2">
    <location>
        <begin position="71"/>
        <end position="75"/>
    </location>
</feature>
<feature type="helix" evidence="2">
    <location>
        <begin position="78"/>
        <end position="93"/>
    </location>
</feature>
<feature type="strand" evidence="2">
    <location>
        <begin position="97"/>
        <end position="103"/>
    </location>
</feature>
<feature type="strand" evidence="2">
    <location>
        <begin position="106"/>
        <end position="110"/>
    </location>
</feature>
<feature type="turn" evidence="2">
    <location>
        <begin position="112"/>
        <end position="117"/>
    </location>
</feature>
<feature type="helix" evidence="2">
    <location>
        <begin position="119"/>
        <end position="137"/>
    </location>
</feature>
<feature type="strand" evidence="2">
    <location>
        <begin position="141"/>
        <end position="148"/>
    </location>
</feature>
<feature type="helix" evidence="2">
    <location>
        <begin position="149"/>
        <end position="158"/>
    </location>
</feature>
<feature type="strand" evidence="2">
    <location>
        <begin position="164"/>
        <end position="166"/>
    </location>
</feature>
<feature type="helix" evidence="2">
    <location>
        <begin position="169"/>
        <end position="171"/>
    </location>
</feature>
<feature type="helix" evidence="2">
    <location>
        <begin position="172"/>
        <end position="177"/>
    </location>
</feature>
<feature type="helix" evidence="2">
    <location>
        <begin position="181"/>
        <end position="183"/>
    </location>
</feature>
<feature type="helix" evidence="2">
    <location>
        <begin position="189"/>
        <end position="197"/>
    </location>
</feature>
<feature type="helix" evidence="3">
    <location>
        <begin position="203"/>
        <end position="208"/>
    </location>
</feature>
<feature type="helix" evidence="3">
    <location>
        <begin position="211"/>
        <end position="215"/>
    </location>
</feature>
<feature type="helix" evidence="3">
    <location>
        <begin position="221"/>
        <end position="231"/>
    </location>
</feature>
<feature type="strand" evidence="3">
    <location>
        <begin position="240"/>
        <end position="242"/>
    </location>
</feature>
<feature type="strand" evidence="3">
    <location>
        <begin position="246"/>
        <end position="250"/>
    </location>
</feature>
<feature type="turn" evidence="3">
    <location>
        <begin position="260"/>
        <end position="263"/>
    </location>
</feature>
<feature type="helix" evidence="3">
    <location>
        <begin position="264"/>
        <end position="275"/>
    </location>
</feature>
<feature type="strand" evidence="3">
    <location>
        <begin position="277"/>
        <end position="279"/>
    </location>
</feature>
<feature type="strand" evidence="3">
    <location>
        <begin position="281"/>
        <end position="293"/>
    </location>
</feature>
<feature type="strand" evidence="3">
    <location>
        <begin position="295"/>
        <end position="301"/>
    </location>
</feature>
<feature type="helix" evidence="3">
    <location>
        <begin position="308"/>
        <end position="322"/>
    </location>
</feature>
<feature type="turn" evidence="3">
    <location>
        <begin position="323"/>
        <end position="325"/>
    </location>
</feature>
<feature type="strand" evidence="3">
    <location>
        <begin position="331"/>
        <end position="342"/>
    </location>
</feature>
<dbReference type="EC" id="2.7.7.7"/>
<dbReference type="EMBL" id="U52110">
    <property type="protein sequence ID" value="AAB38090.1"/>
    <property type="molecule type" value="Genomic_DNA"/>
</dbReference>
<dbReference type="PIR" id="T46875">
    <property type="entry name" value="T46875"/>
</dbReference>
<dbReference type="PDB" id="1IM4">
    <property type="method" value="X-ray"/>
    <property type="resolution" value="2.30 A"/>
    <property type="chains" value="A=2-216"/>
</dbReference>
<dbReference type="PDB" id="1K1Q">
    <property type="method" value="X-ray"/>
    <property type="resolution" value="2.80 A"/>
    <property type="chains" value="A/B=1-354"/>
</dbReference>
<dbReference type="PDB" id="1K1S">
    <property type="method" value="X-ray"/>
    <property type="resolution" value="2.80 A"/>
    <property type="chains" value="A=1-354"/>
</dbReference>
<dbReference type="PDBsum" id="1IM4"/>
<dbReference type="PDBsum" id="1K1Q"/>
<dbReference type="PDBsum" id="1K1S"/>
<dbReference type="SMR" id="P96022"/>
<dbReference type="BRENDA" id="2.7.7.7">
    <property type="organism ID" value="6163"/>
</dbReference>
<dbReference type="EvolutionaryTrace" id="P96022"/>
<dbReference type="GO" id="GO:0005737">
    <property type="term" value="C:cytoplasm"/>
    <property type="evidence" value="ECO:0007669"/>
    <property type="project" value="UniProtKB-SubCell"/>
</dbReference>
<dbReference type="GO" id="GO:0003684">
    <property type="term" value="F:damaged DNA binding"/>
    <property type="evidence" value="ECO:0007669"/>
    <property type="project" value="InterPro"/>
</dbReference>
<dbReference type="GO" id="GO:0003887">
    <property type="term" value="F:DNA-directed DNA polymerase activity"/>
    <property type="evidence" value="ECO:0007669"/>
    <property type="project" value="UniProtKB-UniRule"/>
</dbReference>
<dbReference type="GO" id="GO:0000287">
    <property type="term" value="F:magnesium ion binding"/>
    <property type="evidence" value="ECO:0007669"/>
    <property type="project" value="UniProtKB-UniRule"/>
</dbReference>
<dbReference type="GO" id="GO:0006261">
    <property type="term" value="P:DNA-templated DNA replication"/>
    <property type="evidence" value="ECO:0007669"/>
    <property type="project" value="UniProtKB-UniRule"/>
</dbReference>
<dbReference type="GO" id="GO:0042276">
    <property type="term" value="P:error-prone translesion synthesis"/>
    <property type="evidence" value="ECO:0007669"/>
    <property type="project" value="TreeGrafter"/>
</dbReference>
<dbReference type="CDD" id="cd03586">
    <property type="entry name" value="PolY_Pol_IV_kappa"/>
    <property type="match status" value="1"/>
</dbReference>
<dbReference type="Gene3D" id="3.30.70.270">
    <property type="match status" value="2"/>
</dbReference>
<dbReference type="Gene3D" id="3.40.1170.60">
    <property type="match status" value="1"/>
</dbReference>
<dbReference type="Gene3D" id="1.10.150.20">
    <property type="entry name" value="5' to 3' exonuclease, C-terminal subdomain"/>
    <property type="match status" value="1"/>
</dbReference>
<dbReference type="Gene3D" id="3.30.1490.100">
    <property type="entry name" value="DNA polymerase, Y-family, little finger domain"/>
    <property type="match status" value="1"/>
</dbReference>
<dbReference type="HAMAP" id="MF_01113">
    <property type="entry name" value="DNApol_IV"/>
    <property type="match status" value="1"/>
</dbReference>
<dbReference type="InterPro" id="IPR043502">
    <property type="entry name" value="DNA/RNA_pol_sf"/>
</dbReference>
<dbReference type="InterPro" id="IPR036775">
    <property type="entry name" value="DNA_pol_Y-fam_lit_finger_sf"/>
</dbReference>
<dbReference type="InterPro" id="IPR050116">
    <property type="entry name" value="DNA_polymerase-Y"/>
</dbReference>
<dbReference type="InterPro" id="IPR022880">
    <property type="entry name" value="DNApol_IV"/>
</dbReference>
<dbReference type="InterPro" id="IPR024728">
    <property type="entry name" value="PolY_HhH_motif"/>
</dbReference>
<dbReference type="InterPro" id="IPR043128">
    <property type="entry name" value="Rev_trsase/Diguanyl_cyclase"/>
</dbReference>
<dbReference type="InterPro" id="IPR001126">
    <property type="entry name" value="UmuC"/>
</dbReference>
<dbReference type="NCBIfam" id="NF002292">
    <property type="entry name" value="PRK01216.1"/>
    <property type="match status" value="1"/>
</dbReference>
<dbReference type="PANTHER" id="PTHR11076:SF33">
    <property type="entry name" value="DNA POLYMERASE KAPPA"/>
    <property type="match status" value="1"/>
</dbReference>
<dbReference type="PANTHER" id="PTHR11076">
    <property type="entry name" value="DNA REPAIR POLYMERASE UMUC / TRANSFERASE FAMILY MEMBER"/>
    <property type="match status" value="1"/>
</dbReference>
<dbReference type="Pfam" id="PF00817">
    <property type="entry name" value="IMS"/>
    <property type="match status" value="1"/>
</dbReference>
<dbReference type="Pfam" id="PF11798">
    <property type="entry name" value="IMS_HHH"/>
    <property type="match status" value="1"/>
</dbReference>
<dbReference type="SUPFAM" id="SSF56672">
    <property type="entry name" value="DNA/RNA polymerases"/>
    <property type="match status" value="1"/>
</dbReference>
<dbReference type="SUPFAM" id="SSF100879">
    <property type="entry name" value="Lesion bypass DNA polymerase (Y-family), little finger domain"/>
    <property type="match status" value="1"/>
</dbReference>
<dbReference type="PROSITE" id="PS50173">
    <property type="entry name" value="UMUC"/>
    <property type="match status" value="1"/>
</dbReference>